<organism>
    <name type="scientific">Macaca mulatta</name>
    <name type="common">Rhesus macaque</name>
    <dbReference type="NCBI Taxonomy" id="9544"/>
    <lineage>
        <taxon>Eukaryota</taxon>
        <taxon>Metazoa</taxon>
        <taxon>Chordata</taxon>
        <taxon>Craniata</taxon>
        <taxon>Vertebrata</taxon>
        <taxon>Euteleostomi</taxon>
        <taxon>Mammalia</taxon>
        <taxon>Eutheria</taxon>
        <taxon>Euarchontoglires</taxon>
        <taxon>Primates</taxon>
        <taxon>Haplorrhini</taxon>
        <taxon>Catarrhini</taxon>
        <taxon>Cercopithecidae</taxon>
        <taxon>Cercopithecinae</taxon>
        <taxon>Macaca</taxon>
    </lineage>
</organism>
<protein>
    <recommendedName>
        <fullName>C-C chemokine receptor type 5</fullName>
        <shortName>C-C CKR-5</shortName>
        <shortName>CC-CKR-5</shortName>
        <shortName>CCR-5</shortName>
        <shortName>CCR5</shortName>
    </recommendedName>
    <cdAntigenName>CD195</cdAntigenName>
</protein>
<feature type="chain" id="PRO_0000069264" description="C-C chemokine receptor type 5">
    <location>
        <begin position="1"/>
        <end position="352"/>
    </location>
</feature>
<feature type="topological domain" description="Extracellular" evidence="3">
    <location>
        <begin position="1"/>
        <end position="30"/>
    </location>
</feature>
<feature type="transmembrane region" description="Helical; Name=1" evidence="3">
    <location>
        <begin position="31"/>
        <end position="58"/>
    </location>
</feature>
<feature type="topological domain" description="Cytoplasmic" evidence="3">
    <location>
        <begin position="59"/>
        <end position="68"/>
    </location>
</feature>
<feature type="transmembrane region" description="Helical; Name=2" evidence="3">
    <location>
        <begin position="69"/>
        <end position="89"/>
    </location>
</feature>
<feature type="topological domain" description="Extracellular" evidence="3">
    <location>
        <begin position="90"/>
        <end position="102"/>
    </location>
</feature>
<feature type="transmembrane region" description="Helical; Name=3" evidence="3">
    <location>
        <begin position="103"/>
        <end position="124"/>
    </location>
</feature>
<feature type="topological domain" description="Cytoplasmic" evidence="3">
    <location>
        <begin position="125"/>
        <end position="141"/>
    </location>
</feature>
<feature type="transmembrane region" description="Helical; Name=4" evidence="3">
    <location>
        <begin position="142"/>
        <end position="166"/>
    </location>
</feature>
<feature type="topological domain" description="Extracellular" evidence="3">
    <location>
        <begin position="167"/>
        <end position="198"/>
    </location>
</feature>
<feature type="transmembrane region" description="Helical; Name=5" evidence="3">
    <location>
        <begin position="199"/>
        <end position="218"/>
    </location>
</feature>
<feature type="topological domain" description="Cytoplasmic" evidence="3">
    <location>
        <begin position="219"/>
        <end position="235"/>
    </location>
</feature>
<feature type="transmembrane region" description="Helical; Name=6" evidence="3">
    <location>
        <begin position="236"/>
        <end position="260"/>
    </location>
</feature>
<feature type="topological domain" description="Extracellular" evidence="3">
    <location>
        <begin position="261"/>
        <end position="277"/>
    </location>
</feature>
<feature type="transmembrane region" description="Helical; Name=7" evidence="3">
    <location>
        <begin position="278"/>
        <end position="301"/>
    </location>
</feature>
<feature type="topological domain" description="Cytoplasmic" evidence="3">
    <location>
        <begin position="302"/>
        <end position="352"/>
    </location>
</feature>
<feature type="modified residue" description="Sulfotyrosine" evidence="1">
    <location>
        <position position="3"/>
    </location>
</feature>
<feature type="modified residue" description="Sulfotyrosine" evidence="3">
    <location>
        <position position="10"/>
    </location>
</feature>
<feature type="modified residue" description="Sulfotyrosine" evidence="3">
    <location>
        <position position="14"/>
    </location>
</feature>
<feature type="modified residue" description="Sulfotyrosine" evidence="3">
    <location>
        <position position="15"/>
    </location>
</feature>
<feature type="modified residue" description="Phosphoserine; by BARK1" evidence="1">
    <location>
        <position position="336"/>
    </location>
</feature>
<feature type="modified residue" description="Phosphoserine; by BARK1" evidence="1">
    <location>
        <position position="337"/>
    </location>
</feature>
<feature type="modified residue" description="Phosphoserine; by BARK1" evidence="1">
    <location>
        <position position="342"/>
    </location>
</feature>
<feature type="modified residue" description="Phosphoserine; by BARK1" evidence="1">
    <location>
        <position position="349"/>
    </location>
</feature>
<feature type="lipid moiety-binding region" description="S-palmitoyl cysteine" evidence="1">
    <location>
        <position position="321"/>
    </location>
</feature>
<feature type="lipid moiety-binding region" description="S-palmitoyl cysteine" evidence="1">
    <location>
        <position position="323"/>
    </location>
</feature>
<feature type="lipid moiety-binding region" description="S-palmitoyl cysteine" evidence="1">
    <location>
        <position position="324"/>
    </location>
</feature>
<feature type="glycosylation site" description="O-linked (GalNAc...) serine" evidence="1">
    <location>
        <position position="6"/>
    </location>
</feature>
<feature type="glycosylation site" description="O-linked (GalNAc...) serine" evidence="5">
    <location>
        <position position="7"/>
    </location>
</feature>
<feature type="glycosylation site" description="O-linked (GalNAc...) threonine" evidence="3">
    <location>
        <position position="16"/>
    </location>
</feature>
<feature type="glycosylation site" description="O-linked (GalNAc...) serine" evidence="3">
    <location>
        <position position="17"/>
    </location>
</feature>
<feature type="disulfide bond" evidence="1">
    <location>
        <begin position="20"/>
        <end position="269"/>
    </location>
</feature>
<feature type="disulfide bond" evidence="4">
    <location>
        <begin position="101"/>
        <end position="178"/>
    </location>
</feature>
<feature type="sequence conflict" description="In Ref. 3; AAC34132." evidence="5" ref="3">
    <original>M</original>
    <variation>I</variation>
    <location>
        <position position="241"/>
    </location>
</feature>
<feature type="sequence conflict" description="In Ref. 3; AAC34132." evidence="5" ref="3">
    <original>I</original>
    <variation>M</variation>
    <location>
        <position position="292"/>
    </location>
</feature>
<keyword id="KW-1003">Cell membrane</keyword>
<keyword id="KW-1015">Disulfide bond</keyword>
<keyword id="KW-0297">G-protein coupled receptor</keyword>
<keyword id="KW-0325">Glycoprotein</keyword>
<keyword id="KW-0449">Lipoprotein</keyword>
<keyword id="KW-0472">Membrane</keyword>
<keyword id="KW-0564">Palmitate</keyword>
<keyword id="KW-0597">Phosphoprotein</keyword>
<keyword id="KW-0675">Receptor</keyword>
<keyword id="KW-1185">Reference proteome</keyword>
<keyword id="KW-0765">Sulfation</keyword>
<keyword id="KW-0807">Transducer</keyword>
<keyword id="KW-0812">Transmembrane</keyword>
<keyword id="KW-1133">Transmembrane helix</keyword>
<comment type="function">
    <text evidence="1">Receptor for a number of inflammatory CC-chemokines including CCL3/MIP-1-alpha, CCL4/MIP-1-beta and RANTES and subsequently transduces a signal by increasing the intracellular calcium ion level. May play a role in the control of granulocytic lineage proliferation or differentiation. Participates in T-lymphocyte migration to the infection site by acting as a chemotactic receptor.</text>
</comment>
<comment type="subunit">
    <text evidence="1">Interacts with PRAF2. Efficient ligand binding to CCL3/MIP-1alpha and CCL4/MIP-1beta requires sulfation, O-glycosylation and sialic acid modifications. Glycosylation on Ser-6 is required for efficient binding of CCL4. Interacts with GRK2. Interacts with ARRB1 and ARRB2. Interacts with CNIH4. Interacts with S100A4; this interaction stimulates T-lymphocyte chemotaxis.</text>
</comment>
<comment type="subcellular location">
    <subcellularLocation>
        <location evidence="2">Cell membrane</location>
        <topology evidence="2">Multi-pass membrane protein</topology>
    </subcellularLocation>
</comment>
<comment type="PTM">
    <text evidence="1">Sulfated on at least 2 of the N-terminal tyrosines. Sulfation is required for efficient binding of the chemokines, CCL3 and CCL4 (By similarity).</text>
</comment>
<comment type="PTM">
    <text evidence="1">Palmitoylation in the C-terminal is important for cell surface expression.</text>
</comment>
<comment type="PTM">
    <text evidence="1">Phosphorylation on serine residues in the C-terminal is stimulated by binding CC chemokines especially by APO-RANTES.</text>
</comment>
<comment type="PTM">
    <text evidence="1">O-glycosylated, but not N-glycosylated. Ser-6 appears to be the major site even if Ser-7 may be also O-glycosylated. Also sialylated glycans present which contribute to chemokine binding. Thr-16 and Ser-17 may also be glycosylated and, if so, with small moieties such as a T-antigen.</text>
</comment>
<comment type="similarity">
    <text evidence="4">Belongs to the G-protein coupled receptor 1 family.</text>
</comment>
<name>CCR5_MACMU</name>
<proteinExistence type="evidence at transcript level"/>
<dbReference type="EMBL" id="U77672">
    <property type="protein sequence ID" value="AAC51109.1"/>
    <property type="molecule type" value="Genomic_DNA"/>
</dbReference>
<dbReference type="EMBL" id="U73739">
    <property type="protein sequence ID" value="AAC51158.1"/>
    <property type="molecule type" value="mRNA"/>
</dbReference>
<dbReference type="EMBL" id="U96762">
    <property type="protein sequence ID" value="AAC34132.1"/>
    <property type="molecule type" value="mRNA"/>
</dbReference>
<dbReference type="EMBL" id="AF005662">
    <property type="protein sequence ID" value="AAB62556.1"/>
    <property type="molecule type" value="Genomic_DNA"/>
</dbReference>
<dbReference type="RefSeq" id="NP_001036238.2">
    <property type="nucleotide sequence ID" value="NM_001042773.3"/>
</dbReference>
<dbReference type="RefSeq" id="NP_001296331.1">
    <property type="nucleotide sequence ID" value="NM_001309402.1"/>
</dbReference>
<dbReference type="SMR" id="P61813"/>
<dbReference type="FunCoup" id="P61813">
    <property type="interactions" value="1021"/>
</dbReference>
<dbReference type="STRING" id="9544.ENSMMUP00000075259"/>
<dbReference type="ChEMBL" id="CHEMBL3217397"/>
<dbReference type="DrugCentral" id="P61813"/>
<dbReference type="GlyCosmos" id="P61813">
    <property type="glycosylation" value="4 sites, No reported glycans"/>
</dbReference>
<dbReference type="GeneID" id="735311"/>
<dbReference type="KEGG" id="mcc:735311"/>
<dbReference type="CTD" id="1234"/>
<dbReference type="InParanoid" id="P61813"/>
<dbReference type="OrthoDB" id="9876908at2759"/>
<dbReference type="Proteomes" id="UP000006718">
    <property type="component" value="Unassembled WGS sequence"/>
</dbReference>
<dbReference type="GO" id="GO:0005737">
    <property type="term" value="C:cytoplasm"/>
    <property type="evidence" value="ECO:0000318"/>
    <property type="project" value="GO_Central"/>
</dbReference>
<dbReference type="GO" id="GO:0009897">
    <property type="term" value="C:external side of plasma membrane"/>
    <property type="evidence" value="ECO:0000250"/>
    <property type="project" value="UniProtKB"/>
</dbReference>
<dbReference type="GO" id="GO:0016493">
    <property type="term" value="F:C-C chemokine receptor activity"/>
    <property type="evidence" value="ECO:0000250"/>
    <property type="project" value="UniProtKB"/>
</dbReference>
<dbReference type="GO" id="GO:0071791">
    <property type="term" value="F:chemokine (C-C motif) ligand 5 binding"/>
    <property type="evidence" value="ECO:0000318"/>
    <property type="project" value="GO_Central"/>
</dbReference>
<dbReference type="GO" id="GO:0019722">
    <property type="term" value="P:calcium-mediated signaling"/>
    <property type="evidence" value="ECO:0000318"/>
    <property type="project" value="GO_Central"/>
</dbReference>
<dbReference type="GO" id="GO:0060326">
    <property type="term" value="P:cell chemotaxis"/>
    <property type="evidence" value="ECO:0000318"/>
    <property type="project" value="GO_Central"/>
</dbReference>
<dbReference type="GO" id="GO:0006955">
    <property type="term" value="P:immune response"/>
    <property type="evidence" value="ECO:0000318"/>
    <property type="project" value="GO_Central"/>
</dbReference>
<dbReference type="GO" id="GO:0006954">
    <property type="term" value="P:inflammatory response"/>
    <property type="evidence" value="ECO:0000318"/>
    <property type="project" value="GO_Central"/>
</dbReference>
<dbReference type="GO" id="GO:0007204">
    <property type="term" value="P:positive regulation of cytosolic calcium ion concentration"/>
    <property type="evidence" value="ECO:0000318"/>
    <property type="project" value="GO_Central"/>
</dbReference>
<dbReference type="CDD" id="cd15184">
    <property type="entry name" value="7tmA_CCR5_CCR2"/>
    <property type="match status" value="1"/>
</dbReference>
<dbReference type="FunFam" id="1.20.1070.10:FF:000026">
    <property type="entry name" value="C-C chemokine receptor type 5"/>
    <property type="match status" value="1"/>
</dbReference>
<dbReference type="Gene3D" id="1.20.1070.10">
    <property type="entry name" value="Rhodopsin 7-helix transmembrane proteins"/>
    <property type="match status" value="1"/>
</dbReference>
<dbReference type="InterPro" id="IPR050119">
    <property type="entry name" value="CCR1-9-like"/>
</dbReference>
<dbReference type="InterPro" id="IPR002240">
    <property type="entry name" value="Chemokine_CCR5"/>
</dbReference>
<dbReference type="InterPro" id="IPR000355">
    <property type="entry name" value="Chemokine_rcpt"/>
</dbReference>
<dbReference type="InterPro" id="IPR000276">
    <property type="entry name" value="GPCR_Rhodpsn"/>
</dbReference>
<dbReference type="InterPro" id="IPR017452">
    <property type="entry name" value="GPCR_Rhodpsn_7TM"/>
</dbReference>
<dbReference type="PANTHER" id="PTHR10489:SF686">
    <property type="entry name" value="C-C CHEMOKINE RECEPTOR TYPE 5"/>
    <property type="match status" value="1"/>
</dbReference>
<dbReference type="PANTHER" id="PTHR10489">
    <property type="entry name" value="CELL ADHESION MOLECULE"/>
    <property type="match status" value="1"/>
</dbReference>
<dbReference type="Pfam" id="PF00001">
    <property type="entry name" value="7tm_1"/>
    <property type="match status" value="1"/>
</dbReference>
<dbReference type="PRINTS" id="PR00657">
    <property type="entry name" value="CCCHEMOKINER"/>
</dbReference>
<dbReference type="PRINTS" id="PR01110">
    <property type="entry name" value="CHEMOKINER5"/>
</dbReference>
<dbReference type="PRINTS" id="PR00237">
    <property type="entry name" value="GPCRRHODOPSN"/>
</dbReference>
<dbReference type="SUPFAM" id="SSF81321">
    <property type="entry name" value="Family A G protein-coupled receptor-like"/>
    <property type="match status" value="1"/>
</dbReference>
<dbReference type="PROSITE" id="PS00237">
    <property type="entry name" value="G_PROTEIN_RECEP_F1_1"/>
    <property type="match status" value="1"/>
</dbReference>
<dbReference type="PROSITE" id="PS50262">
    <property type="entry name" value="G_PROTEIN_RECEP_F1_2"/>
    <property type="match status" value="1"/>
</dbReference>
<reference key="1">
    <citation type="journal article" date="1997" name="J. Virol.">
        <title>Utilization of C-C chemokine receptor 5 by the envelope glycoproteins of a pathogenic simian immunodeficiency virus, SIVmac239.</title>
        <authorList>
            <person name="Marcon L."/>
            <person name="Choe H."/>
            <person name="Martin K.A."/>
            <person name="Farzan M."/>
            <person name="Ponath P.D."/>
            <person name="Wu L."/>
            <person name="Newman W."/>
            <person name="Gerard N."/>
            <person name="Gerard C."/>
            <person name="Sodroski J."/>
        </authorList>
    </citation>
    <scope>NUCLEOTIDE SEQUENCE [GENOMIC DNA]</scope>
</reference>
<reference key="2">
    <citation type="journal article" date="1997" name="J. Virol.">
        <title>Genetically divergent strains of simian immunodeficiency virus use CCR5 as a coreceptor for entry.</title>
        <authorList>
            <person name="Chen Z."/>
            <person name="Zhou P."/>
            <person name="Ho D.D."/>
            <person name="Landau N.R."/>
            <person name="Marx P.A."/>
        </authorList>
    </citation>
    <scope>NUCLEOTIDE SEQUENCE [MRNA]</scope>
    <source>
        <strain>Indian macaque</strain>
    </source>
</reference>
<reference key="3">
    <citation type="journal article" date="2001" name="AIDS Res. Hum. Retroviruses">
        <title>Identification and comparison of eleven rhesus macaque chemokine receptors.</title>
        <authorList>
            <person name="Margulies B.J."/>
            <person name="Hauer D.A."/>
            <person name="Clements J.E."/>
        </authorList>
    </citation>
    <scope>NUCLEOTIDE SEQUENCE [MRNA]</scope>
</reference>
<reference key="4">
    <citation type="journal article" date="1997" name="Proc. Natl. Acad. Sci. U.S.A.">
        <title>Differential utilization of CCR5 by macrophage and T cell tropic simian immunodeficiency virus strains.</title>
        <authorList>
            <person name="Edinger A.L."/>
            <person name="Amedee A."/>
            <person name="Miller K."/>
            <person name="Doranz B.J."/>
            <person name="Endres M."/>
            <person name="Sharron M."/>
            <person name="Samson M."/>
            <person name="Lu Z.-H."/>
            <person name="Clements J.E."/>
            <person name="Murphey-Corb M."/>
            <person name="Peiper S.C."/>
            <person name="Parmentier M."/>
            <person name="Broder C.C."/>
            <person name="Doms R.W."/>
        </authorList>
    </citation>
    <scope>NUCLEOTIDE SEQUENCE [GENOMIC DNA]</scope>
</reference>
<evidence type="ECO:0000250" key="1">
    <source>
        <dbReference type="UniProtKB" id="P51681"/>
    </source>
</evidence>
<evidence type="ECO:0000250" key="2">
    <source>
        <dbReference type="UniProtKB" id="Q9XT76"/>
    </source>
</evidence>
<evidence type="ECO:0000255" key="3"/>
<evidence type="ECO:0000255" key="4">
    <source>
        <dbReference type="PROSITE-ProRule" id="PRU00521"/>
    </source>
</evidence>
<evidence type="ECO:0000305" key="5"/>
<accession>P61813</accession>
<accession>O02746</accession>
<accession>P79436</accession>
<sequence length="352" mass="40507">MDYQVSSPTYDIDYYTSEPCQKINVKQIAARLLPPLYSLVFIFGFVGNILVVLILINCKRLKSMTDIYLLNLAISDLLFLLTVPFWAHYAAAQWDFGNTMCQLLTGLYFIGFFSGIFFIILLTIDRYLAIVHAVFALKARTVTFGVVTSVITWVVAVFASLPGIIFTRSQREGLHYTCSSHFPYSQYQFWKNFQTLKMVILGLVLPLLVMVICYSGILKTLLRCRNEKKRHRAVRLIFTIMIVYFLFWAPYNIVLLLNTFQEFFGLNNCSSSNRLDQAMQVTETLGMTHCCINPIIYAFVGEKFRNYLLVFFQKHIAKRFCKCCSIFQQEAPERASSVYTRSTGEQEISVGL</sequence>
<gene>
    <name type="primary">CCR5</name>
    <name type="synonym">CMKBR5</name>
</gene>